<protein>
    <recommendedName>
        <fullName evidence="8">O-antigen biosynthesis glycosyltransferase WclY</fullName>
        <ecNumber evidence="4">2.4.1.-</ecNumber>
    </recommendedName>
    <alternativeName>
        <fullName evidence="7">Alpha-1,4-glucosyltransferase</fullName>
    </alternativeName>
    <alternativeName>
        <fullName evidence="7">Glucosyltransferase</fullName>
        <shortName evidence="7">Glc-T</shortName>
    </alternativeName>
    <alternativeName>
        <fullName evidence="6 7 10">Glycosyltransferase</fullName>
    </alternativeName>
</protein>
<organism evidence="10">
    <name type="scientific">Escherichia coli</name>
    <dbReference type="NCBI Taxonomy" id="562"/>
    <lineage>
        <taxon>Bacteria</taxon>
        <taxon>Pseudomonadati</taxon>
        <taxon>Pseudomonadota</taxon>
        <taxon>Gammaproteobacteria</taxon>
        <taxon>Enterobacterales</taxon>
        <taxon>Enterobacteriaceae</taxon>
        <taxon>Escherichia</taxon>
    </lineage>
</organism>
<accession>A6M9B7</accession>
<feature type="chain" id="PRO_0000458142" description="O-antigen biosynthesis glycosyltransferase WclY">
    <location>
        <begin position="1"/>
        <end position="353"/>
    </location>
</feature>
<feature type="transmembrane region" description="Helical" evidence="2">
    <location>
        <begin position="116"/>
        <end position="136"/>
    </location>
</feature>
<feature type="short sequence motif" description="E(x7)E" evidence="9">
    <location>
        <begin position="263"/>
        <end position="271"/>
    </location>
</feature>
<feature type="binding site" evidence="1">
    <location>
        <position position="190"/>
    </location>
    <ligand>
        <name>UDP</name>
        <dbReference type="ChEBI" id="CHEBI:58223"/>
    </ligand>
</feature>
<feature type="binding site" evidence="1">
    <location>
        <position position="271"/>
    </location>
    <ligand>
        <name>UDP</name>
        <dbReference type="ChEBI" id="CHEBI:58223"/>
    </ligand>
</feature>
<feature type="mutagenesis site" description="Loss of activity." evidence="4">
    <location>
        <begin position="1"/>
        <end position="130"/>
    </location>
</feature>
<feature type="mutagenesis site" description="No effect on glycosyl transferase activity or donor specificity. Very high GlcNAc-transferase activity; when associated with C-194. Higher Glc- and Gal-transferase activity than wild-type; when associated with D-217. GlcNAc-transferase activity with very low other activities; when associated with C-194 and D-217." evidence="4">
    <original>G</original>
    <variation>W</variation>
    <location>
        <position position="119"/>
    </location>
</feature>
<feature type="mutagenesis site" description="No effect on activity or donor specificity." evidence="4">
    <original>D</original>
    <variation>A</variation>
    <location>
        <position position="161"/>
    </location>
</feature>
<feature type="mutagenesis site" description="No effect on activity or donor specificity." evidence="4">
    <original>D</original>
    <variation>A</variation>
    <location>
        <position position="163"/>
    </location>
</feature>
<feature type="mutagenesis site" description="Lower Glc-transferase activity, but significantly higher GlcNAc-transferase activity compared to wild-type. Very high GlcNAc-transferase activity; when associated with W-119. Lower Glc-transferase activity, but significantly higher GlcNAc-transferase activity compared to wild-type; when associated with D-217. GlcNAc-transferase activity with very low other activities; when associated with W-119 and D-217." evidence="4">
    <original>R</original>
    <variation>C</variation>
    <location>
        <position position="194"/>
    </location>
</feature>
<feature type="mutagenesis site" description="No effect on glycosyl transferase activity or donor specificity. Higher Glc- and Gal-transferase activity than wild-type; when associated with W-119. Lower Glc-transferase activity, but significantly higher GlcNAc-transferase activity compared to wild-type; when associated with C-194. GlcNAc-transferase activity with very low other activities; when associated with W-119 and C-194." evidence="4">
    <original>N</original>
    <variation>D</variation>
    <location>
        <position position="217"/>
    </location>
</feature>
<feature type="mutagenesis site" description="Loss of glycosyl transferase activity. No activity with UDP-Glc, UDP-GlcNAc, UDP-Gal or UDP-GalNAc as the donor substrate." evidence="4">
    <original>E</original>
    <variation>A</variation>
    <location>
        <position position="263"/>
    </location>
</feature>
<feature type="mutagenesis site" description="Loss of glycosyl transferase activity. No activity with UDP-Glc, UDP-GlcNAc, UDP-Gal or UDP-GalNAc as the donor substrate." evidence="4">
    <original>E</original>
    <variation>A</variation>
    <location>
        <position position="271"/>
    </location>
</feature>
<dbReference type="EC" id="2.4.1.-" evidence="4"/>
<dbReference type="EMBL" id="DQ465247">
    <property type="protein sequence ID" value="ABE98416.1"/>
    <property type="molecule type" value="Genomic_DNA"/>
</dbReference>
<dbReference type="EMBL" id="EU694096">
    <property type="protein sequence ID" value="ACH97146.1"/>
    <property type="molecule type" value="Genomic_DNA"/>
</dbReference>
<dbReference type="EMBL" id="AAAFOP010000019">
    <property type="protein sequence ID" value="EAB7202698.1"/>
    <property type="molecule type" value="Genomic_DNA"/>
</dbReference>
<dbReference type="EMBL" id="AAAGZE010000037">
    <property type="protein sequence ID" value="EAC1533331.1"/>
    <property type="molecule type" value="Genomic_DNA"/>
</dbReference>
<dbReference type="EMBL" id="UGDC01000003">
    <property type="protein sequence ID" value="STJ79952.1"/>
    <property type="molecule type" value="Genomic_DNA"/>
</dbReference>
<dbReference type="EMBL" id="UGFG01000001">
    <property type="protein sequence ID" value="STM38366.1"/>
    <property type="molecule type" value="Genomic_DNA"/>
</dbReference>
<dbReference type="RefSeq" id="WP_032227922.1">
    <property type="nucleotide sequence ID" value="NZ_LM996875.1"/>
</dbReference>
<dbReference type="SMR" id="A6M9B7"/>
<dbReference type="CAZy" id="GT4">
    <property type="family name" value="Glycosyltransferase Family 4"/>
</dbReference>
<dbReference type="PATRIC" id="fig|562.7957.peg.3927"/>
<dbReference type="BioCyc" id="MetaCyc:MONOMER-21528"/>
<dbReference type="UniPathway" id="UPA00281"/>
<dbReference type="Proteomes" id="UP000254429">
    <property type="component" value="Unassembled WGS sequence"/>
</dbReference>
<dbReference type="Proteomes" id="UP000254785">
    <property type="component" value="Unassembled WGS sequence"/>
</dbReference>
<dbReference type="Proteomes" id="UP000382540">
    <property type="component" value="Unassembled WGS sequence"/>
</dbReference>
<dbReference type="GO" id="GO:0009276">
    <property type="term" value="C:Gram-negative-bacterium-type cell wall"/>
    <property type="evidence" value="ECO:0000314"/>
    <property type="project" value="UniProtKB"/>
</dbReference>
<dbReference type="GO" id="GO:0016020">
    <property type="term" value="C:membrane"/>
    <property type="evidence" value="ECO:0007669"/>
    <property type="project" value="UniProtKB-SubCell"/>
</dbReference>
<dbReference type="GO" id="GO:0004373">
    <property type="term" value="F:alpha-1,4-glucan glucosyltransferase (UDP-glucose donor) activity"/>
    <property type="evidence" value="ECO:0007669"/>
    <property type="project" value="UniProtKB-EC"/>
</dbReference>
<dbReference type="GO" id="GO:0046527">
    <property type="term" value="F:glucosyltransferase activity"/>
    <property type="evidence" value="ECO:0000314"/>
    <property type="project" value="UniProtKB"/>
</dbReference>
<dbReference type="GO" id="GO:0043165">
    <property type="term" value="P:Gram-negative-bacterium-type cell outer membrane assembly"/>
    <property type="evidence" value="ECO:0000314"/>
    <property type="project" value="UniProtKB"/>
</dbReference>
<dbReference type="GO" id="GO:0009103">
    <property type="term" value="P:lipopolysaccharide biosynthetic process"/>
    <property type="evidence" value="ECO:0000314"/>
    <property type="project" value="UniProtKB"/>
</dbReference>
<dbReference type="GO" id="GO:0009243">
    <property type="term" value="P:O antigen biosynthetic process"/>
    <property type="evidence" value="ECO:0000314"/>
    <property type="project" value="UniProtKB"/>
</dbReference>
<dbReference type="CDD" id="cd03801">
    <property type="entry name" value="GT4_PimA-like"/>
    <property type="match status" value="1"/>
</dbReference>
<dbReference type="Gene3D" id="3.40.50.2000">
    <property type="entry name" value="Glycogen Phosphorylase B"/>
    <property type="match status" value="2"/>
</dbReference>
<dbReference type="InterPro" id="IPR001296">
    <property type="entry name" value="Glyco_trans_1"/>
</dbReference>
<dbReference type="InterPro" id="IPR028098">
    <property type="entry name" value="Glyco_trans_4-like_N"/>
</dbReference>
<dbReference type="PANTHER" id="PTHR12526">
    <property type="entry name" value="GLYCOSYLTRANSFERASE"/>
    <property type="match status" value="1"/>
</dbReference>
<dbReference type="Pfam" id="PF13439">
    <property type="entry name" value="Glyco_transf_4"/>
    <property type="match status" value="1"/>
</dbReference>
<dbReference type="Pfam" id="PF00534">
    <property type="entry name" value="Glycos_transf_1"/>
    <property type="match status" value="1"/>
</dbReference>
<dbReference type="SUPFAM" id="SSF53756">
    <property type="entry name" value="UDP-Glycosyltransferase/glycogen phosphorylase"/>
    <property type="match status" value="1"/>
</dbReference>
<sequence length="353" mass="40838">MKIAYVVSSKKKCGPNIVILNIVKELANKHEMEIFFLDESDDDVFECVNVKSTQIKKASDLKEHLKRFDIIHSSGIRPDALVVLCKVIYRVKCKIITTIHNYVFQDLYYSYGLVKSLIGGLLWCSIWLFFDKLVILSKNADNYYWFLPSAKKNIIYNGIDDNDCLQNKKCNYRKEFNIPDDGILAGSCANLTKRKGIDLVIQTLTKEHKIYYIVAGNGIEKHNLINLVKARKLHERVYFIDFLDEPESFMSQLDVFLMPSRSEGFGLTVLESTKLGIPVITSNIPIFMELFDQMCLTFDIKNPSTLIDVITYAKKNRLHLSQKFHAIFQDRFTSSKMATKYENVYNNLFREVL</sequence>
<name>GLCT_ECOLX</name>
<keyword id="KW-0328">Glycosyltransferase</keyword>
<keyword id="KW-0448">Lipopolysaccharide biosynthesis</keyword>
<keyword id="KW-0472">Membrane</keyword>
<keyword id="KW-0808">Transferase</keyword>
<keyword id="KW-0812">Transmembrane</keyword>
<keyword id="KW-1133">Transmembrane helix</keyword>
<comment type="function">
    <text evidence="3 4">Involved in the assembly of the O-repeating unit during O-antigen biosynthesis. Glucosyltransferase accountable for the alpha-D-Glc-1,4-beta-D-Gal linkage within the O-antigen (PubMed:21968437, PubMed:32421169). Transfers alpha-1,4-Glc to the Gal moiety of a specific Gal-beta1-3GalNAc-alpha-OPO3-PO3-phenoxyundecyl (Gal-beta1-3GalNAc-PP-PhU) synthetic natural acceptor substrate analog. Requires both Gal-beta1-3GalNAc-alpha and the diphosphate moiety in the acceptor. Not active with GalNAc-PP-PhU, GlcNAc-PP-PhU, Gal-beta1-3GalNAc-alpha-O-benzyl, D-Rha-alpha1-3GlcNAc-alpha-PP-PhU or D-Man-alpha1-3Man-alpha-5-benzamidopentyl (BAP), nor with glycopeptides TTTVTP (Gal-beta1-3GalNAc-alpha-)TPTG or TT (Gal-beta1-3GalNAc-alpha-)TVTPTPTG as acceptor substrates. Has a broad nucleotide sugar donor substrate specificity with ADP-Glc, TDP-Glc and UDP-Glc as superior donors. Gal, GlcNAc, and GalNAc residues are transferred from UDP-sugars, but with low activity. UDP-Xyl, UDP-GlcA, GDP-Fuc or GDP-K-Rha do not act as donors (PubMed:32421169).</text>
</comment>
<comment type="activity regulation">
    <text evidence="4">Activated by 5mM MnCl(2) and MgCl(2). No significant effect on activity by 5 mM ethylenediaminetetraacetic acid (EDTA), 0.125-0.5% Triton X-100 or dithiothreitol (DTT). Inhibited by 5 mM Zn-acetate.</text>
</comment>
<comment type="biophysicochemical properties">
    <kinetics>
        <KM evidence="4">0.345 mM for Gal-beta1-3GalNAc-PP-PhU</KM>
        <Vmax evidence="4">152.0 nmol/h/mg enzyme with Gal-beta1-3GalNAc-PP-PhU as substrate</Vmax>
    </kinetics>
    <phDependence>
        <text evidence="4">Optimum pH is 7-8. Retains 24% of maximal activity at pH 5 and 14% of activity at pH 9.</text>
    </phDependence>
    <temperatureDependence>
        <text>Retains 50% of the activity in elution buffer/20% glycerol for four days at 4 degrees Celsius. Retains 60% of the activity in several days storage at -20 degrees Celsius with 20% glycerol.</text>
    </temperatureDependence>
</comment>
<comment type="pathway">
    <text evidence="3 4">Bacterial outer membrane biogenesis; LPS O-antigen biosynthesis.</text>
</comment>
<comment type="subcellular location">
    <subcellularLocation>
        <location evidence="2">Membrane</location>
        <topology evidence="2">Single-pass membrane protein</topology>
    </subcellularLocation>
</comment>
<comment type="disruption phenotype">
    <text evidence="3">Loss of LPS O-antigen production.</text>
</comment>
<comment type="miscellaneous">
    <text evidence="9">According to PubMed:32421169, the hydrophopic domain of this protein is likely to play a role in stabilizing the association of it with peripheral membrane or possibly, with the hydrophobic moiety of the acceptor substrate. However, a transmembrane domain is predicted by a program.</text>
</comment>
<comment type="similarity">
    <text evidence="8">Belongs to the glycosyltransferase group 1 family. Glycosyltransferase 4 subfamily.</text>
</comment>
<reference evidence="10" key="1">
    <citation type="journal article" date="2007" name="Mol. Cell. Probes">
        <title>Sequencing and analysis of the Escherichia coli serogroup O117, O126, and O146 O-antigen gene clusters and development of PCR assays targeting serogroup O117-, O126-, and O146-specific DNA sequences.</title>
        <authorList>
            <person name="Liu Y."/>
            <person name="Debroy C."/>
            <person name="Fratamico P."/>
        </authorList>
    </citation>
    <scope>NUCLEOTIDE SEQUENCE [GENOMIC DNA]</scope>
    <source>
        <strain evidence="10">O117</strain>
    </source>
</reference>
<reference evidence="11" key="2">
    <citation type="journal article" date="2009" name="FEMS Immunol. Med. Microbiol.">
        <title>Genetic and structural analyses of Escherichia coli O107 and O117 O-antigens.</title>
        <authorList>
            <person name="Wang Q."/>
            <person name="Perepelov A.V."/>
            <person name="Feng L."/>
            <person name="Knirel Y.A."/>
            <person name="Li Y."/>
            <person name="Wang L."/>
        </authorList>
    </citation>
    <scope>NUCLEOTIDE SEQUENCE [GENOMIC DNA]</scope>
</reference>
<reference evidence="12" key="3">
    <citation type="submission" date="2018-09" db="EMBL/GenBank/DDBJ databases">
        <authorList>
            <person name="Ashton P.M."/>
            <person name="Dallman T."/>
            <person name="Nair S."/>
            <person name="De Pinna E."/>
            <person name="Peters T."/>
            <person name="Grant K."/>
        </authorList>
    </citation>
    <scope>NUCLEOTIDE SEQUENCE [LARGE SCALE GENOMIC DNA]</scope>
    <source>
        <strain evidence="12">587367</strain>
    </source>
</reference>
<reference evidence="13" key="4">
    <citation type="submission" date="2018-10" db="EMBL/GenBank/DDBJ databases">
        <authorList>
            <consortium name="NARMS: The National Antimicrobial Resistance Monitoring System"/>
        </authorList>
    </citation>
    <scope>NUCLEOTIDE SEQUENCE [LARGE SCALE GENOMIC DNA]</scope>
    <source>
        <strain evidence="13">CVM N17EC1330</strain>
    </source>
</reference>
<reference evidence="16 17" key="5">
    <citation type="submission" date="2018-06" db="EMBL/GenBank/DDBJ databases">
        <authorList>
            <consortium name="Pathogen Informatics"/>
            <person name="Doyle S."/>
        </authorList>
    </citation>
    <scope>NUCLEOTIDE SEQUENCE [LARGE SCALE GENOMIC DNA]</scope>
    <source>
        <strain evidence="15 16">NCTC8500</strain>
        <strain evidence="14 17">NCTC9117</strain>
    </source>
</reference>
<reference key="6">
    <citation type="journal article" date="2012" name="Glycobiology">
        <title>Identification of the two glycosyltransferase genes responsible for the difference between Escherichia coli O107 and O117 O-antigens.</title>
        <authorList>
            <person name="Wang Q."/>
            <person name="Perepelov A.V."/>
            <person name="Wen L."/>
            <person name="Shashkov A.S."/>
            <person name="Wang X."/>
            <person name="Guo X."/>
            <person name="Knirel Y.A."/>
            <person name="Wang L."/>
        </authorList>
    </citation>
    <scope>FUNCTION</scope>
    <scope>PATHWAY</scope>
    <scope>DISRUPTION PHENOTYPE</scope>
</reference>
<reference key="7">
    <citation type="journal article" date="2020" name="Glycobiology">
        <title>The wclY gene of Escherichia coli serotype O117 encodes an alpha1,4-glucosyltransferase with strict acceptor specificity but broad donor specificity.</title>
        <authorList>
            <person name="Kocev A."/>
            <person name="Melamed J."/>
            <person name="Torgov V."/>
            <person name="Danilov L."/>
            <person name="Veselovsky V."/>
            <person name="Brockhausen I."/>
        </authorList>
    </citation>
    <scope>FUNCTION</scope>
    <scope>CATALYTIC ACTIVITY</scope>
    <scope>SUBSTRATE SPECIFICITY</scope>
    <scope>ACTIVITY REGULATION</scope>
    <scope>BIOPHYSICOCHEMICAL PROPERTIES</scope>
    <scope>PATHWAY</scope>
    <scope>MOTIF</scope>
    <scope>MUTAGENESIS OF 1-MET--PHE-130; GLY-119; ASP-161; ASP-163; ARG-194; ASN-217; GLU-263 AND GLU-271</scope>
    <scope>3D-STRUCTURE MODELING</scope>
    <source>
        <strain evidence="7">O117</strain>
    </source>
</reference>
<gene>
    <name evidence="5 6 7 11" type="primary">wclY</name>
    <name evidence="10" type="synonym">wbeC</name>
    <name evidence="12" type="ORF">D4U49_09000</name>
    <name evidence="13" type="ORF">D9J61_15030</name>
    <name evidence="15" type="ORF">NCTC8500_02134</name>
    <name evidence="14" type="ORF">NCTC9117_02549</name>
</gene>
<evidence type="ECO:0000250" key="1">
    <source>
        <dbReference type="UniProtKB" id="Q81ST7"/>
    </source>
</evidence>
<evidence type="ECO:0000255" key="2"/>
<evidence type="ECO:0000269" key="3">
    <source>
    </source>
</evidence>
<evidence type="ECO:0000269" key="4">
    <source>
    </source>
</evidence>
<evidence type="ECO:0000303" key="5">
    <source>
    </source>
</evidence>
<evidence type="ECO:0000303" key="6">
    <source>
    </source>
</evidence>
<evidence type="ECO:0000303" key="7">
    <source>
    </source>
</evidence>
<evidence type="ECO:0000305" key="8"/>
<evidence type="ECO:0000305" key="9">
    <source>
    </source>
</evidence>
<evidence type="ECO:0000312" key="10">
    <source>
        <dbReference type="EMBL" id="ABE98416.1"/>
    </source>
</evidence>
<evidence type="ECO:0000312" key="11">
    <source>
        <dbReference type="EMBL" id="ACH97146.1"/>
    </source>
</evidence>
<evidence type="ECO:0000312" key="12">
    <source>
        <dbReference type="EMBL" id="EAB7202698.1"/>
    </source>
</evidence>
<evidence type="ECO:0000312" key="13">
    <source>
        <dbReference type="EMBL" id="EAC1533331.1"/>
    </source>
</evidence>
<evidence type="ECO:0000312" key="14">
    <source>
        <dbReference type="EMBL" id="STJ79952.1"/>
    </source>
</evidence>
<evidence type="ECO:0000312" key="15">
    <source>
        <dbReference type="EMBL" id="STM38366.1"/>
    </source>
</evidence>
<evidence type="ECO:0000312" key="16">
    <source>
        <dbReference type="Proteomes" id="UP000254429"/>
    </source>
</evidence>
<evidence type="ECO:0000312" key="17">
    <source>
        <dbReference type="Proteomes" id="UP000254785"/>
    </source>
</evidence>
<proteinExistence type="evidence at protein level"/>